<name>CCA_BACAN</name>
<protein>
    <recommendedName>
        <fullName evidence="1">CCA-adding enzyme</fullName>
        <ecNumber evidence="1">2.7.7.72</ecNumber>
    </recommendedName>
    <alternativeName>
        <fullName evidence="1">CCA tRNA nucleotidyltransferase</fullName>
    </alternativeName>
    <alternativeName>
        <fullName evidence="1">tRNA CCA-pyrophosphorylase</fullName>
    </alternativeName>
    <alternativeName>
        <fullName evidence="1">tRNA adenylyl-/cytidylyl- transferase</fullName>
    </alternativeName>
    <alternativeName>
        <fullName evidence="1">tRNA nucleotidyltransferase</fullName>
    </alternativeName>
    <alternativeName>
        <fullName evidence="1">tRNA-NT</fullName>
    </alternativeName>
</protein>
<comment type="function">
    <text evidence="1">Catalyzes the addition and repair of the essential 3'-terminal CCA sequence in tRNAs without using a nucleic acid template. Adds these three nucleotides in the order of C, C, and A to the tRNA nucleotide-73, using CTP and ATP as substrates and producing inorganic pyrophosphate. tRNA 3'-terminal CCA addition is required both for tRNA processing and repair. Also involved in tRNA surveillance by mediating tandem CCA addition to generate a CCACCA at the 3' terminus of unstable tRNAs. While stable tRNAs receive only 3'-terminal CCA, unstable tRNAs are marked with CCACCA and rapidly degraded.</text>
</comment>
<comment type="catalytic activity">
    <reaction evidence="1">
        <text>a tRNA precursor + 2 CTP + ATP = a tRNA with a 3' CCA end + 3 diphosphate</text>
        <dbReference type="Rhea" id="RHEA:14433"/>
        <dbReference type="Rhea" id="RHEA-COMP:10465"/>
        <dbReference type="Rhea" id="RHEA-COMP:10468"/>
        <dbReference type="ChEBI" id="CHEBI:30616"/>
        <dbReference type="ChEBI" id="CHEBI:33019"/>
        <dbReference type="ChEBI" id="CHEBI:37563"/>
        <dbReference type="ChEBI" id="CHEBI:74896"/>
        <dbReference type="ChEBI" id="CHEBI:83071"/>
        <dbReference type="EC" id="2.7.7.72"/>
    </reaction>
</comment>
<comment type="catalytic activity">
    <reaction evidence="1">
        <text>a tRNA with a 3' CCA end + 2 CTP + ATP = a tRNA with a 3' CCACCA end + 3 diphosphate</text>
        <dbReference type="Rhea" id="RHEA:76235"/>
        <dbReference type="Rhea" id="RHEA-COMP:10468"/>
        <dbReference type="Rhea" id="RHEA-COMP:18655"/>
        <dbReference type="ChEBI" id="CHEBI:30616"/>
        <dbReference type="ChEBI" id="CHEBI:33019"/>
        <dbReference type="ChEBI" id="CHEBI:37563"/>
        <dbReference type="ChEBI" id="CHEBI:83071"/>
        <dbReference type="ChEBI" id="CHEBI:195187"/>
    </reaction>
    <physiologicalReaction direction="left-to-right" evidence="1">
        <dbReference type="Rhea" id="RHEA:76236"/>
    </physiologicalReaction>
</comment>
<comment type="cofactor">
    <cofactor evidence="1">
        <name>Mg(2+)</name>
        <dbReference type="ChEBI" id="CHEBI:18420"/>
    </cofactor>
</comment>
<comment type="subunit">
    <text evidence="1">Homodimer.</text>
</comment>
<comment type="miscellaneous">
    <text evidence="1">A single active site specifically recognizes both ATP and CTP and is responsible for their addition.</text>
</comment>
<comment type="similarity">
    <text evidence="1">Belongs to the tRNA nucleotidyltransferase/poly(A) polymerase family. Bacterial CCA-adding enzyme type 3 subfamily.</text>
</comment>
<keyword id="KW-0067">ATP-binding</keyword>
<keyword id="KW-0460">Magnesium</keyword>
<keyword id="KW-0479">Metal-binding</keyword>
<keyword id="KW-0547">Nucleotide-binding</keyword>
<keyword id="KW-0548">Nucleotidyltransferase</keyword>
<keyword id="KW-1185">Reference proteome</keyword>
<keyword id="KW-0692">RNA repair</keyword>
<keyword id="KW-0694">RNA-binding</keyword>
<keyword id="KW-0808">Transferase</keyword>
<keyword id="KW-0819">tRNA processing</keyword>
<sequence length="397" mass="45932">MERFKKASSIIETLKQQGHEAYFVGGSVRDLIIDRPIGDIDIATSALPEEVMAIFPRHVPVGLEHGTVIVVENGEPYEVTTFRTESEYEDFRRPSSVQFVRSLEEDLKRRDFTMNAIAMTEEGEMVDLFAGQEAIQKREIVTVGNAADRFQEDALRMMRGIRFVSTLGFSLETKTKQAIETYGHLLEHIAIERITVEFEKLLTGTYCVKGLKELVETKLFSHLPYLQMSEERLLKATQYNWDSFETDIEAWAFFLYCIGEEHPSVFLRQWKFSNKKIKDIVAVLLTIRKRKEKDWDTVLLYKTGIHIAEMAERVYEAMIESYDHTSVERVQTLFQALPIKSRQEMDVTGNDLLNWASKKPGPWVAEMIQKIEEAIVQGNVVNEKECIREWLQECNLL</sequence>
<organism>
    <name type="scientific">Bacillus anthracis</name>
    <dbReference type="NCBI Taxonomy" id="1392"/>
    <lineage>
        <taxon>Bacteria</taxon>
        <taxon>Bacillati</taxon>
        <taxon>Bacillota</taxon>
        <taxon>Bacilli</taxon>
        <taxon>Bacillales</taxon>
        <taxon>Bacillaceae</taxon>
        <taxon>Bacillus</taxon>
        <taxon>Bacillus cereus group</taxon>
    </lineage>
</organism>
<accession>Q81ST6</accession>
<accession>Q6I116</accession>
<accession>Q6KUW9</accession>
<reference key="1">
    <citation type="journal article" date="2003" name="Nature">
        <title>The genome sequence of Bacillus anthracis Ames and comparison to closely related bacteria.</title>
        <authorList>
            <person name="Read T.D."/>
            <person name="Peterson S.N."/>
            <person name="Tourasse N.J."/>
            <person name="Baillie L.W."/>
            <person name="Paulsen I.T."/>
            <person name="Nelson K.E."/>
            <person name="Tettelin H."/>
            <person name="Fouts D.E."/>
            <person name="Eisen J.A."/>
            <person name="Gill S.R."/>
            <person name="Holtzapple E.K."/>
            <person name="Okstad O.A."/>
            <person name="Helgason E."/>
            <person name="Rilstone J."/>
            <person name="Wu M."/>
            <person name="Kolonay J.F."/>
            <person name="Beanan M.J."/>
            <person name="Dodson R.J."/>
            <person name="Brinkac L.M."/>
            <person name="Gwinn M.L."/>
            <person name="DeBoy R.T."/>
            <person name="Madpu R."/>
            <person name="Daugherty S.C."/>
            <person name="Durkin A.S."/>
            <person name="Haft D.H."/>
            <person name="Nelson W.C."/>
            <person name="Peterson J.D."/>
            <person name="Pop M."/>
            <person name="Khouri H.M."/>
            <person name="Radune D."/>
            <person name="Benton J.L."/>
            <person name="Mahamoud Y."/>
            <person name="Jiang L."/>
            <person name="Hance I.R."/>
            <person name="Weidman J.F."/>
            <person name="Berry K.J."/>
            <person name="Plaut R.D."/>
            <person name="Wolf A.M."/>
            <person name="Watkins K.L."/>
            <person name="Nierman W.C."/>
            <person name="Hazen A."/>
            <person name="Cline R.T."/>
            <person name="Redmond C."/>
            <person name="Thwaite J.E."/>
            <person name="White O."/>
            <person name="Salzberg S.L."/>
            <person name="Thomason B."/>
            <person name="Friedlander A.M."/>
            <person name="Koehler T.M."/>
            <person name="Hanna P.C."/>
            <person name="Kolstoe A.-B."/>
            <person name="Fraser C.M."/>
        </authorList>
    </citation>
    <scope>NUCLEOTIDE SEQUENCE [LARGE SCALE GENOMIC DNA]</scope>
    <source>
        <strain>Ames / isolate Porton</strain>
    </source>
</reference>
<reference key="2">
    <citation type="journal article" date="2009" name="J. Bacteriol.">
        <title>The complete genome sequence of Bacillus anthracis Ames 'Ancestor'.</title>
        <authorList>
            <person name="Ravel J."/>
            <person name="Jiang L."/>
            <person name="Stanley S.T."/>
            <person name="Wilson M.R."/>
            <person name="Decker R.S."/>
            <person name="Read T.D."/>
            <person name="Worsham P."/>
            <person name="Keim P.S."/>
            <person name="Salzberg S.L."/>
            <person name="Fraser-Liggett C.M."/>
            <person name="Rasko D.A."/>
        </authorList>
    </citation>
    <scope>NUCLEOTIDE SEQUENCE [LARGE SCALE GENOMIC DNA]</scope>
    <source>
        <strain>Ames ancestor</strain>
    </source>
</reference>
<reference key="3">
    <citation type="submission" date="2004-01" db="EMBL/GenBank/DDBJ databases">
        <title>Complete genome sequence of Bacillus anthracis Sterne.</title>
        <authorList>
            <person name="Brettin T.S."/>
            <person name="Bruce D."/>
            <person name="Challacombe J.F."/>
            <person name="Gilna P."/>
            <person name="Han C."/>
            <person name="Hill K."/>
            <person name="Hitchcock P."/>
            <person name="Jackson P."/>
            <person name="Keim P."/>
            <person name="Longmire J."/>
            <person name="Lucas S."/>
            <person name="Okinaka R."/>
            <person name="Richardson P."/>
            <person name="Rubin E."/>
            <person name="Tice H."/>
        </authorList>
    </citation>
    <scope>NUCLEOTIDE SEQUENCE [LARGE SCALE GENOMIC DNA]</scope>
    <source>
        <strain>Sterne</strain>
    </source>
</reference>
<evidence type="ECO:0000255" key="1">
    <source>
        <dbReference type="HAMAP-Rule" id="MF_01263"/>
    </source>
</evidence>
<dbReference type="EC" id="2.7.7.72" evidence="1"/>
<dbReference type="EMBL" id="AE016879">
    <property type="protein sequence ID" value="AAP25495.1"/>
    <property type="molecule type" value="Genomic_DNA"/>
</dbReference>
<dbReference type="EMBL" id="AE017334">
    <property type="protein sequence ID" value="AAT30657.1"/>
    <property type="molecule type" value="Genomic_DNA"/>
</dbReference>
<dbReference type="EMBL" id="AE017225">
    <property type="protein sequence ID" value="AAT53766.1"/>
    <property type="molecule type" value="Genomic_DNA"/>
</dbReference>
<dbReference type="RefSeq" id="NP_844009.1">
    <property type="nucleotide sequence ID" value="NC_003997.3"/>
</dbReference>
<dbReference type="RefSeq" id="WP_000439304.1">
    <property type="nucleotide sequence ID" value="NZ_WXXJ01000001.1"/>
</dbReference>
<dbReference type="RefSeq" id="YP_027715.1">
    <property type="nucleotide sequence ID" value="NC_005945.1"/>
</dbReference>
<dbReference type="SMR" id="Q81ST6"/>
<dbReference type="STRING" id="261594.GBAA_1559"/>
<dbReference type="DNASU" id="1086405"/>
<dbReference type="GeneID" id="45021531"/>
<dbReference type="KEGG" id="ban:BA_1559"/>
<dbReference type="KEGG" id="bar:GBAA_1559"/>
<dbReference type="KEGG" id="bat:BAS1446"/>
<dbReference type="PATRIC" id="fig|198094.11.peg.1529"/>
<dbReference type="eggNOG" id="COG0617">
    <property type="taxonomic scope" value="Bacteria"/>
</dbReference>
<dbReference type="HOGENOM" id="CLU_015961_3_0_9"/>
<dbReference type="OMA" id="WKNSNAM"/>
<dbReference type="OrthoDB" id="9805698at2"/>
<dbReference type="Proteomes" id="UP000000427">
    <property type="component" value="Chromosome"/>
</dbReference>
<dbReference type="Proteomes" id="UP000000594">
    <property type="component" value="Chromosome"/>
</dbReference>
<dbReference type="GO" id="GO:0005524">
    <property type="term" value="F:ATP binding"/>
    <property type="evidence" value="ECO:0007669"/>
    <property type="project" value="UniProtKB-UniRule"/>
</dbReference>
<dbReference type="GO" id="GO:0004810">
    <property type="term" value="F:CCA tRNA nucleotidyltransferase activity"/>
    <property type="evidence" value="ECO:0007669"/>
    <property type="project" value="UniProtKB-UniRule"/>
</dbReference>
<dbReference type="GO" id="GO:0000287">
    <property type="term" value="F:magnesium ion binding"/>
    <property type="evidence" value="ECO:0007669"/>
    <property type="project" value="UniProtKB-UniRule"/>
</dbReference>
<dbReference type="GO" id="GO:0000049">
    <property type="term" value="F:tRNA binding"/>
    <property type="evidence" value="ECO:0007669"/>
    <property type="project" value="UniProtKB-UniRule"/>
</dbReference>
<dbReference type="GO" id="GO:0042245">
    <property type="term" value="P:RNA repair"/>
    <property type="evidence" value="ECO:0007669"/>
    <property type="project" value="UniProtKB-KW"/>
</dbReference>
<dbReference type="GO" id="GO:0001680">
    <property type="term" value="P:tRNA 3'-terminal CCA addition"/>
    <property type="evidence" value="ECO:0007669"/>
    <property type="project" value="UniProtKB-UniRule"/>
</dbReference>
<dbReference type="CDD" id="cd05398">
    <property type="entry name" value="NT_ClassII-CCAase"/>
    <property type="match status" value="1"/>
</dbReference>
<dbReference type="Gene3D" id="1.10.110.30">
    <property type="match status" value="1"/>
</dbReference>
<dbReference type="Gene3D" id="1.10.246.80">
    <property type="match status" value="1"/>
</dbReference>
<dbReference type="Gene3D" id="1.20.58.560">
    <property type="match status" value="1"/>
</dbReference>
<dbReference type="Gene3D" id="3.30.460.10">
    <property type="entry name" value="Beta Polymerase, domain 2"/>
    <property type="match status" value="1"/>
</dbReference>
<dbReference type="HAMAP" id="MF_01263">
    <property type="entry name" value="CCA_bact_type3"/>
    <property type="match status" value="1"/>
</dbReference>
<dbReference type="InterPro" id="IPR050264">
    <property type="entry name" value="Bact_CCA-adding_enz_type3_sf"/>
</dbReference>
<dbReference type="InterPro" id="IPR032810">
    <property type="entry name" value="CCA-adding_enz_C"/>
</dbReference>
<dbReference type="InterPro" id="IPR023068">
    <property type="entry name" value="CCA-adding_enz_firmicutes"/>
</dbReference>
<dbReference type="InterPro" id="IPR043519">
    <property type="entry name" value="NT_sf"/>
</dbReference>
<dbReference type="InterPro" id="IPR002646">
    <property type="entry name" value="PolA_pol_head_dom"/>
</dbReference>
<dbReference type="InterPro" id="IPR032828">
    <property type="entry name" value="PolyA_RNA-bd"/>
</dbReference>
<dbReference type="NCBIfam" id="NF009814">
    <property type="entry name" value="PRK13299.1"/>
    <property type="match status" value="1"/>
</dbReference>
<dbReference type="PANTHER" id="PTHR46173">
    <property type="entry name" value="CCA TRNA NUCLEOTIDYLTRANSFERASE 1, MITOCHONDRIAL"/>
    <property type="match status" value="1"/>
</dbReference>
<dbReference type="PANTHER" id="PTHR46173:SF1">
    <property type="entry name" value="CCA TRNA NUCLEOTIDYLTRANSFERASE 1, MITOCHONDRIAL"/>
    <property type="match status" value="1"/>
</dbReference>
<dbReference type="Pfam" id="PF01743">
    <property type="entry name" value="PolyA_pol"/>
    <property type="match status" value="1"/>
</dbReference>
<dbReference type="Pfam" id="PF12627">
    <property type="entry name" value="PolyA_pol_RNAbd"/>
    <property type="match status" value="1"/>
</dbReference>
<dbReference type="Pfam" id="PF13735">
    <property type="entry name" value="tRNA_NucTran2_2"/>
    <property type="match status" value="1"/>
</dbReference>
<dbReference type="SUPFAM" id="SSF81301">
    <property type="entry name" value="Nucleotidyltransferase"/>
    <property type="match status" value="1"/>
</dbReference>
<dbReference type="SUPFAM" id="SSF81891">
    <property type="entry name" value="Poly A polymerase C-terminal region-like"/>
    <property type="match status" value="1"/>
</dbReference>
<proteinExistence type="inferred from homology"/>
<feature type="chain" id="PRO_0000139025" description="CCA-adding enzyme">
    <location>
        <begin position="1"/>
        <end position="397"/>
    </location>
</feature>
<feature type="binding site" evidence="1">
    <location>
        <position position="26"/>
    </location>
    <ligand>
        <name>ATP</name>
        <dbReference type="ChEBI" id="CHEBI:30616"/>
    </ligand>
</feature>
<feature type="binding site" evidence="1">
    <location>
        <position position="26"/>
    </location>
    <ligand>
        <name>CTP</name>
        <dbReference type="ChEBI" id="CHEBI:37563"/>
    </ligand>
</feature>
<feature type="binding site" evidence="1">
    <location>
        <position position="29"/>
    </location>
    <ligand>
        <name>ATP</name>
        <dbReference type="ChEBI" id="CHEBI:30616"/>
    </ligand>
</feature>
<feature type="binding site" evidence="1">
    <location>
        <position position="29"/>
    </location>
    <ligand>
        <name>CTP</name>
        <dbReference type="ChEBI" id="CHEBI:37563"/>
    </ligand>
</feature>
<feature type="binding site" evidence="1">
    <location>
        <position position="39"/>
    </location>
    <ligand>
        <name>Mg(2+)</name>
        <dbReference type="ChEBI" id="CHEBI:18420"/>
    </ligand>
</feature>
<feature type="binding site" evidence="1">
    <location>
        <position position="41"/>
    </location>
    <ligand>
        <name>Mg(2+)</name>
        <dbReference type="ChEBI" id="CHEBI:18420"/>
    </ligand>
</feature>
<feature type="binding site" evidence="1">
    <location>
        <position position="110"/>
    </location>
    <ligand>
        <name>ATP</name>
        <dbReference type="ChEBI" id="CHEBI:30616"/>
    </ligand>
</feature>
<feature type="binding site" evidence="1">
    <location>
        <position position="110"/>
    </location>
    <ligand>
        <name>CTP</name>
        <dbReference type="ChEBI" id="CHEBI:37563"/>
    </ligand>
</feature>
<feature type="binding site" evidence="1">
    <location>
        <position position="153"/>
    </location>
    <ligand>
        <name>ATP</name>
        <dbReference type="ChEBI" id="CHEBI:30616"/>
    </ligand>
</feature>
<feature type="binding site" evidence="1">
    <location>
        <position position="153"/>
    </location>
    <ligand>
        <name>CTP</name>
        <dbReference type="ChEBI" id="CHEBI:37563"/>
    </ligand>
</feature>
<feature type="binding site" evidence="1">
    <location>
        <position position="156"/>
    </location>
    <ligand>
        <name>ATP</name>
        <dbReference type="ChEBI" id="CHEBI:30616"/>
    </ligand>
</feature>
<feature type="binding site" evidence="1">
    <location>
        <position position="156"/>
    </location>
    <ligand>
        <name>CTP</name>
        <dbReference type="ChEBI" id="CHEBI:37563"/>
    </ligand>
</feature>
<feature type="binding site" evidence="1">
    <location>
        <position position="159"/>
    </location>
    <ligand>
        <name>ATP</name>
        <dbReference type="ChEBI" id="CHEBI:30616"/>
    </ligand>
</feature>
<feature type="binding site" evidence="1">
    <location>
        <position position="159"/>
    </location>
    <ligand>
        <name>CTP</name>
        <dbReference type="ChEBI" id="CHEBI:37563"/>
    </ligand>
</feature>
<feature type="binding site" evidence="1">
    <location>
        <position position="162"/>
    </location>
    <ligand>
        <name>ATP</name>
        <dbReference type="ChEBI" id="CHEBI:30616"/>
    </ligand>
</feature>
<feature type="binding site" evidence="1">
    <location>
        <position position="162"/>
    </location>
    <ligand>
        <name>CTP</name>
        <dbReference type="ChEBI" id="CHEBI:37563"/>
    </ligand>
</feature>
<gene>
    <name evidence="1" type="primary">cca</name>
    <name type="ordered locus">BA_1559</name>
    <name type="ordered locus">GBAA_1559</name>
    <name type="ordered locus">BAS1446</name>
</gene>